<protein>
    <recommendedName>
        <fullName evidence="1">Spermidine/putrescine import ATP-binding protein PotA</fullName>
        <ecNumber evidence="1">7.6.2.11</ecNumber>
    </recommendedName>
</protein>
<comment type="function">
    <text evidence="1">Part of the ABC transporter complex PotABCD involved in spermidine/putrescine import. Responsible for energy coupling to the transport system.</text>
</comment>
<comment type="catalytic activity">
    <reaction evidence="1">
        <text>ATP + H2O + polyamine-[polyamine-binding protein]Side 1 = ADP + phosphate + polyamineSide 2 + [polyamine-binding protein]Side 1.</text>
        <dbReference type="EC" id="7.6.2.11"/>
    </reaction>
</comment>
<comment type="subunit">
    <text evidence="1">The complex is composed of two ATP-binding proteins (PotA), two transmembrane proteins (PotB and PotC) and a solute-binding protein (PotD).</text>
</comment>
<comment type="subcellular location">
    <subcellularLocation>
        <location evidence="1">Cell inner membrane</location>
        <topology evidence="1">Peripheral membrane protein</topology>
    </subcellularLocation>
</comment>
<comment type="similarity">
    <text evidence="1">Belongs to the ABC transporter superfamily. Spermidine/putrescine importer (TC 3.A.1.11.1) family.</text>
</comment>
<dbReference type="EC" id="7.6.2.11" evidence="1"/>
<dbReference type="EMBL" id="AE009951">
    <property type="protein sequence ID" value="AAL93896.1"/>
    <property type="molecule type" value="Genomic_DNA"/>
</dbReference>
<dbReference type="RefSeq" id="NP_602597.1">
    <property type="nucleotide sequence ID" value="NC_003454.1"/>
</dbReference>
<dbReference type="RefSeq" id="WP_011015834.1">
    <property type="nucleotide sequence ID" value="NZ_OZ209243.1"/>
</dbReference>
<dbReference type="SMR" id="Q8RI39"/>
<dbReference type="STRING" id="190304.FN1797"/>
<dbReference type="PaxDb" id="190304-FN1797"/>
<dbReference type="EnsemblBacteria" id="AAL93896">
    <property type="protein sequence ID" value="AAL93896"/>
    <property type="gene ID" value="FN1797"/>
</dbReference>
<dbReference type="KEGG" id="fnu:FN1797"/>
<dbReference type="PATRIC" id="fig|190304.8.peg.272"/>
<dbReference type="eggNOG" id="COG3842">
    <property type="taxonomic scope" value="Bacteria"/>
</dbReference>
<dbReference type="HOGENOM" id="CLU_000604_1_1_0"/>
<dbReference type="InParanoid" id="Q8RI39"/>
<dbReference type="BioCyc" id="FNUC190304:G1FZS-295-MONOMER"/>
<dbReference type="Proteomes" id="UP000002521">
    <property type="component" value="Chromosome"/>
</dbReference>
<dbReference type="GO" id="GO:0043190">
    <property type="term" value="C:ATP-binding cassette (ABC) transporter complex"/>
    <property type="evidence" value="ECO:0007669"/>
    <property type="project" value="InterPro"/>
</dbReference>
<dbReference type="GO" id="GO:0015594">
    <property type="term" value="F:ABC-type putrescine transporter activity"/>
    <property type="evidence" value="ECO:0007669"/>
    <property type="project" value="InterPro"/>
</dbReference>
<dbReference type="GO" id="GO:0005524">
    <property type="term" value="F:ATP binding"/>
    <property type="evidence" value="ECO:0007669"/>
    <property type="project" value="UniProtKB-KW"/>
</dbReference>
<dbReference type="GO" id="GO:0016887">
    <property type="term" value="F:ATP hydrolysis activity"/>
    <property type="evidence" value="ECO:0007669"/>
    <property type="project" value="InterPro"/>
</dbReference>
<dbReference type="CDD" id="cd03300">
    <property type="entry name" value="ABC_PotA_N"/>
    <property type="match status" value="1"/>
</dbReference>
<dbReference type="FunFam" id="3.40.50.300:FF:000425">
    <property type="entry name" value="Probable ABC transporter, ATP-binding subunit"/>
    <property type="match status" value="1"/>
</dbReference>
<dbReference type="Gene3D" id="2.40.50.100">
    <property type="match status" value="1"/>
</dbReference>
<dbReference type="Gene3D" id="3.40.50.300">
    <property type="entry name" value="P-loop containing nucleotide triphosphate hydrolases"/>
    <property type="match status" value="1"/>
</dbReference>
<dbReference type="InterPro" id="IPR003593">
    <property type="entry name" value="AAA+_ATPase"/>
</dbReference>
<dbReference type="InterPro" id="IPR050093">
    <property type="entry name" value="ABC_SmlMolc_Importer"/>
</dbReference>
<dbReference type="InterPro" id="IPR003439">
    <property type="entry name" value="ABC_transporter-like_ATP-bd"/>
</dbReference>
<dbReference type="InterPro" id="IPR017871">
    <property type="entry name" value="ABC_transporter-like_CS"/>
</dbReference>
<dbReference type="InterPro" id="IPR008995">
    <property type="entry name" value="Mo/tungstate-bd_C_term_dom"/>
</dbReference>
<dbReference type="InterPro" id="IPR027417">
    <property type="entry name" value="P-loop_NTPase"/>
</dbReference>
<dbReference type="InterPro" id="IPR005893">
    <property type="entry name" value="PotA-like"/>
</dbReference>
<dbReference type="InterPro" id="IPR017879">
    <property type="entry name" value="PotA_ATP-bd"/>
</dbReference>
<dbReference type="InterPro" id="IPR013611">
    <property type="entry name" value="Transp-assoc_OB_typ2"/>
</dbReference>
<dbReference type="NCBIfam" id="TIGR01187">
    <property type="entry name" value="potA"/>
    <property type="match status" value="1"/>
</dbReference>
<dbReference type="PANTHER" id="PTHR42781">
    <property type="entry name" value="SPERMIDINE/PUTRESCINE IMPORT ATP-BINDING PROTEIN POTA"/>
    <property type="match status" value="1"/>
</dbReference>
<dbReference type="PANTHER" id="PTHR42781:SF4">
    <property type="entry name" value="SPERMIDINE_PUTRESCINE IMPORT ATP-BINDING PROTEIN POTA"/>
    <property type="match status" value="1"/>
</dbReference>
<dbReference type="Pfam" id="PF00005">
    <property type="entry name" value="ABC_tran"/>
    <property type="match status" value="1"/>
</dbReference>
<dbReference type="Pfam" id="PF08402">
    <property type="entry name" value="TOBE_2"/>
    <property type="match status" value="1"/>
</dbReference>
<dbReference type="SMART" id="SM00382">
    <property type="entry name" value="AAA"/>
    <property type="match status" value="1"/>
</dbReference>
<dbReference type="SUPFAM" id="SSF50331">
    <property type="entry name" value="MOP-like"/>
    <property type="match status" value="1"/>
</dbReference>
<dbReference type="SUPFAM" id="SSF52540">
    <property type="entry name" value="P-loop containing nucleoside triphosphate hydrolases"/>
    <property type="match status" value="1"/>
</dbReference>
<dbReference type="PROSITE" id="PS00211">
    <property type="entry name" value="ABC_TRANSPORTER_1"/>
    <property type="match status" value="1"/>
</dbReference>
<dbReference type="PROSITE" id="PS50893">
    <property type="entry name" value="ABC_TRANSPORTER_2"/>
    <property type="match status" value="1"/>
</dbReference>
<dbReference type="PROSITE" id="PS51305">
    <property type="entry name" value="POTA"/>
    <property type="match status" value="1"/>
</dbReference>
<evidence type="ECO:0000255" key="1">
    <source>
        <dbReference type="HAMAP-Rule" id="MF_01726"/>
    </source>
</evidence>
<name>POTA_FUSNN</name>
<keyword id="KW-0067">ATP-binding</keyword>
<keyword id="KW-0997">Cell inner membrane</keyword>
<keyword id="KW-1003">Cell membrane</keyword>
<keyword id="KW-0472">Membrane</keyword>
<keyword id="KW-0547">Nucleotide-binding</keyword>
<keyword id="KW-1185">Reference proteome</keyword>
<keyword id="KW-1278">Translocase</keyword>
<keyword id="KW-0813">Transport</keyword>
<sequence length="376" mass="42586">MEKKDINIVNVNKSFDGVQILKDINLKIEQGEFFSIIGPSGCGKTTLLRMIAGFISPDSGAIYLGDENIVNLPPNLRNVNTIFQKYALFPHLNVFENVAFPLRLKKVDEKTINEEVNKYLKLVGLEEHSTKKVSQLSGGQQQRISIARALINKPGVLLLDEPLSALDAKLRQNLLIELDLIHDEVGITFIFITHDQQEALSISDRIAVMNAGKVLQVGTPAEVYEAPADTFVADFLGENNFFSGKVTEIINEELAKINLEGIGEIIIELDKKVKIGDKVTISLRPEKIKLSKNEIKKTKNYMNSAAVYVDEYIYSGFQSKYYVHLKNNEKLKFKIFMQHAAFFDDNDEKAIWWDEDAYITWDAYDGYLVEVESEKK</sequence>
<feature type="chain" id="PRO_0000286220" description="Spermidine/putrescine import ATP-binding protein PotA">
    <location>
        <begin position="1"/>
        <end position="376"/>
    </location>
</feature>
<feature type="domain" description="ABC transporter" evidence="1">
    <location>
        <begin position="6"/>
        <end position="236"/>
    </location>
</feature>
<feature type="binding site" evidence="1">
    <location>
        <begin position="38"/>
        <end position="45"/>
    </location>
    <ligand>
        <name>ATP</name>
        <dbReference type="ChEBI" id="CHEBI:30616"/>
    </ligand>
</feature>
<proteinExistence type="inferred from homology"/>
<accession>Q8RI39</accession>
<organism>
    <name type="scientific">Fusobacterium nucleatum subsp. nucleatum (strain ATCC 25586 / DSM 15643 / BCRC 10681 / CIP 101130 / JCM 8532 / KCTC 2640 / LMG 13131 / VPI 4355)</name>
    <dbReference type="NCBI Taxonomy" id="190304"/>
    <lineage>
        <taxon>Bacteria</taxon>
        <taxon>Fusobacteriati</taxon>
        <taxon>Fusobacteriota</taxon>
        <taxon>Fusobacteriia</taxon>
        <taxon>Fusobacteriales</taxon>
        <taxon>Fusobacteriaceae</taxon>
        <taxon>Fusobacterium</taxon>
    </lineage>
</organism>
<gene>
    <name evidence="1" type="primary">potA</name>
    <name type="ordered locus">FN1797</name>
</gene>
<reference key="1">
    <citation type="journal article" date="2002" name="J. Bacteriol.">
        <title>Genome sequence and analysis of the oral bacterium Fusobacterium nucleatum strain ATCC 25586.</title>
        <authorList>
            <person name="Kapatral V."/>
            <person name="Anderson I."/>
            <person name="Ivanova N."/>
            <person name="Reznik G."/>
            <person name="Los T."/>
            <person name="Lykidis A."/>
            <person name="Bhattacharyya A."/>
            <person name="Bartman A."/>
            <person name="Gardner W."/>
            <person name="Grechkin G."/>
            <person name="Zhu L."/>
            <person name="Vasieva O."/>
            <person name="Chu L."/>
            <person name="Kogan Y."/>
            <person name="Chaga O."/>
            <person name="Goltsman E."/>
            <person name="Bernal A."/>
            <person name="Larsen N."/>
            <person name="D'Souza M."/>
            <person name="Walunas T."/>
            <person name="Pusch G."/>
            <person name="Haselkorn R."/>
            <person name="Fonstein M."/>
            <person name="Kyrpides N.C."/>
            <person name="Overbeek R."/>
        </authorList>
    </citation>
    <scope>NUCLEOTIDE SEQUENCE [LARGE SCALE GENOMIC DNA]</scope>
    <source>
        <strain>ATCC 25586 / DSM 15643 / BCRC 10681 / CIP 101130 / JCM 8532 / KCTC 2640 / LMG 13131 / VPI 4355</strain>
    </source>
</reference>